<protein>
    <recommendedName>
        <fullName evidence="1">Adenylosuccinate synthetase</fullName>
        <shortName evidence="1">AMPSase</shortName>
        <shortName evidence="1">AdSS</shortName>
        <ecNumber evidence="1">6.3.4.4</ecNumber>
    </recommendedName>
    <alternativeName>
        <fullName evidence="1">IMP--aspartate ligase</fullName>
    </alternativeName>
</protein>
<sequence length="432" mass="47136">MGNNVVVLGTQWGDEGKGKIVDLLTERAKYVVRYQGGHNAGHTLVINGEKTVLHLIPSGILRENVTSIIGNGVVLSPAALMKEMKGLEDRGIPVRERLLLSEACPLILDYHVALDVAREKARGAKAIGTTGRGIGPAYEDKVARRGLRVGDLFDKATFADKLKEVMEYHNFQLVNFYKAEAVDYQKVLDDVMAIADILTGMVVDVSDLLDQARKRGDFVMFEGAQGTLLDIDHGTYPYVTSSNTTAGGVATGSGLGPRYVDYVLGIIKAYSTRVGAGPFPTELFDETGEFLCKQGNEFGATTGRRRRTGWLDAVAVRRAVQINSLSGFCLTKLDVLDGLKEVKICVGYRMPDGREVTTTPLAADNWEGIEPIYETMPGWSETTFGVKERSGLPQAALNYIQRIEELTGVPVDIISTGPDRTETMILRDPFDA</sequence>
<comment type="function">
    <text evidence="1">Plays an important role in the de novo pathway of purine nucleotide biosynthesis. Catalyzes the first committed step in the biosynthesis of AMP from IMP.</text>
</comment>
<comment type="catalytic activity">
    <reaction evidence="1">
        <text>IMP + L-aspartate + GTP = N(6)-(1,2-dicarboxyethyl)-AMP + GDP + phosphate + 2 H(+)</text>
        <dbReference type="Rhea" id="RHEA:15753"/>
        <dbReference type="ChEBI" id="CHEBI:15378"/>
        <dbReference type="ChEBI" id="CHEBI:29991"/>
        <dbReference type="ChEBI" id="CHEBI:37565"/>
        <dbReference type="ChEBI" id="CHEBI:43474"/>
        <dbReference type="ChEBI" id="CHEBI:57567"/>
        <dbReference type="ChEBI" id="CHEBI:58053"/>
        <dbReference type="ChEBI" id="CHEBI:58189"/>
        <dbReference type="EC" id="6.3.4.4"/>
    </reaction>
</comment>
<comment type="cofactor">
    <cofactor evidence="1">
        <name>Mg(2+)</name>
        <dbReference type="ChEBI" id="CHEBI:18420"/>
    </cofactor>
    <text evidence="1">Binds 1 Mg(2+) ion per subunit.</text>
</comment>
<comment type="pathway">
    <text evidence="1">Purine metabolism; AMP biosynthesis via de novo pathway; AMP from IMP: step 1/2.</text>
</comment>
<comment type="subunit">
    <text evidence="1">Homodimer.</text>
</comment>
<comment type="subcellular location">
    <subcellularLocation>
        <location evidence="1">Cytoplasm</location>
    </subcellularLocation>
</comment>
<comment type="similarity">
    <text evidence="1">Belongs to the adenylosuccinate synthetase family.</text>
</comment>
<name>PURA_KLEP3</name>
<dbReference type="EC" id="6.3.4.4" evidence="1"/>
<dbReference type="EMBL" id="CP000964">
    <property type="protein sequence ID" value="ACI09914.1"/>
    <property type="molecule type" value="Genomic_DNA"/>
</dbReference>
<dbReference type="SMR" id="B5Y325"/>
<dbReference type="KEGG" id="kpe:KPK_5091"/>
<dbReference type="HOGENOM" id="CLU_029848_0_0_6"/>
<dbReference type="UniPathway" id="UPA00075">
    <property type="reaction ID" value="UER00335"/>
</dbReference>
<dbReference type="Proteomes" id="UP000001734">
    <property type="component" value="Chromosome"/>
</dbReference>
<dbReference type="GO" id="GO:0005737">
    <property type="term" value="C:cytoplasm"/>
    <property type="evidence" value="ECO:0007669"/>
    <property type="project" value="UniProtKB-SubCell"/>
</dbReference>
<dbReference type="GO" id="GO:0004019">
    <property type="term" value="F:adenylosuccinate synthase activity"/>
    <property type="evidence" value="ECO:0007669"/>
    <property type="project" value="UniProtKB-UniRule"/>
</dbReference>
<dbReference type="GO" id="GO:0005525">
    <property type="term" value="F:GTP binding"/>
    <property type="evidence" value="ECO:0007669"/>
    <property type="project" value="UniProtKB-UniRule"/>
</dbReference>
<dbReference type="GO" id="GO:0000287">
    <property type="term" value="F:magnesium ion binding"/>
    <property type="evidence" value="ECO:0007669"/>
    <property type="project" value="UniProtKB-UniRule"/>
</dbReference>
<dbReference type="GO" id="GO:0044208">
    <property type="term" value="P:'de novo' AMP biosynthetic process"/>
    <property type="evidence" value="ECO:0007669"/>
    <property type="project" value="UniProtKB-UniRule"/>
</dbReference>
<dbReference type="GO" id="GO:0046040">
    <property type="term" value="P:IMP metabolic process"/>
    <property type="evidence" value="ECO:0007669"/>
    <property type="project" value="TreeGrafter"/>
</dbReference>
<dbReference type="CDD" id="cd03108">
    <property type="entry name" value="AdSS"/>
    <property type="match status" value="1"/>
</dbReference>
<dbReference type="FunFam" id="1.10.300.10:FF:000001">
    <property type="entry name" value="Adenylosuccinate synthetase"/>
    <property type="match status" value="1"/>
</dbReference>
<dbReference type="FunFam" id="3.90.170.10:FF:000001">
    <property type="entry name" value="Adenylosuccinate synthetase"/>
    <property type="match status" value="1"/>
</dbReference>
<dbReference type="Gene3D" id="3.40.440.10">
    <property type="entry name" value="Adenylosuccinate Synthetase, subunit A, domain 1"/>
    <property type="match status" value="1"/>
</dbReference>
<dbReference type="Gene3D" id="1.10.300.10">
    <property type="entry name" value="Adenylosuccinate Synthetase, subunit A, domain 2"/>
    <property type="match status" value="1"/>
</dbReference>
<dbReference type="Gene3D" id="3.90.170.10">
    <property type="entry name" value="Adenylosuccinate Synthetase, subunit A, domain 3"/>
    <property type="match status" value="1"/>
</dbReference>
<dbReference type="HAMAP" id="MF_00011">
    <property type="entry name" value="Adenylosucc_synth"/>
    <property type="match status" value="1"/>
</dbReference>
<dbReference type="InterPro" id="IPR018220">
    <property type="entry name" value="Adenylosuccin_syn_GTP-bd"/>
</dbReference>
<dbReference type="InterPro" id="IPR033128">
    <property type="entry name" value="Adenylosuccin_syn_Lys_AS"/>
</dbReference>
<dbReference type="InterPro" id="IPR042109">
    <property type="entry name" value="Adenylosuccinate_synth_dom1"/>
</dbReference>
<dbReference type="InterPro" id="IPR042110">
    <property type="entry name" value="Adenylosuccinate_synth_dom2"/>
</dbReference>
<dbReference type="InterPro" id="IPR042111">
    <property type="entry name" value="Adenylosuccinate_synth_dom3"/>
</dbReference>
<dbReference type="InterPro" id="IPR001114">
    <property type="entry name" value="Adenylosuccinate_synthetase"/>
</dbReference>
<dbReference type="InterPro" id="IPR027417">
    <property type="entry name" value="P-loop_NTPase"/>
</dbReference>
<dbReference type="NCBIfam" id="NF002223">
    <property type="entry name" value="PRK01117.1"/>
    <property type="match status" value="1"/>
</dbReference>
<dbReference type="NCBIfam" id="TIGR00184">
    <property type="entry name" value="purA"/>
    <property type="match status" value="1"/>
</dbReference>
<dbReference type="PANTHER" id="PTHR11846">
    <property type="entry name" value="ADENYLOSUCCINATE SYNTHETASE"/>
    <property type="match status" value="1"/>
</dbReference>
<dbReference type="PANTHER" id="PTHR11846:SF0">
    <property type="entry name" value="ADENYLOSUCCINATE SYNTHETASE"/>
    <property type="match status" value="1"/>
</dbReference>
<dbReference type="Pfam" id="PF00709">
    <property type="entry name" value="Adenylsucc_synt"/>
    <property type="match status" value="1"/>
</dbReference>
<dbReference type="SMART" id="SM00788">
    <property type="entry name" value="Adenylsucc_synt"/>
    <property type="match status" value="1"/>
</dbReference>
<dbReference type="SUPFAM" id="SSF52540">
    <property type="entry name" value="P-loop containing nucleoside triphosphate hydrolases"/>
    <property type="match status" value="1"/>
</dbReference>
<dbReference type="PROSITE" id="PS01266">
    <property type="entry name" value="ADENYLOSUCCIN_SYN_1"/>
    <property type="match status" value="1"/>
</dbReference>
<dbReference type="PROSITE" id="PS00513">
    <property type="entry name" value="ADENYLOSUCCIN_SYN_2"/>
    <property type="match status" value="1"/>
</dbReference>
<evidence type="ECO:0000255" key="1">
    <source>
        <dbReference type="HAMAP-Rule" id="MF_00011"/>
    </source>
</evidence>
<proteinExistence type="inferred from homology"/>
<accession>B5Y325</accession>
<gene>
    <name evidence="1" type="primary">purA</name>
    <name type="ordered locus">KPK_5091</name>
</gene>
<keyword id="KW-0963">Cytoplasm</keyword>
<keyword id="KW-0342">GTP-binding</keyword>
<keyword id="KW-0436">Ligase</keyword>
<keyword id="KW-0460">Magnesium</keyword>
<keyword id="KW-0479">Metal-binding</keyword>
<keyword id="KW-0547">Nucleotide-binding</keyword>
<keyword id="KW-0658">Purine biosynthesis</keyword>
<organism>
    <name type="scientific">Klebsiella pneumoniae (strain 342)</name>
    <dbReference type="NCBI Taxonomy" id="507522"/>
    <lineage>
        <taxon>Bacteria</taxon>
        <taxon>Pseudomonadati</taxon>
        <taxon>Pseudomonadota</taxon>
        <taxon>Gammaproteobacteria</taxon>
        <taxon>Enterobacterales</taxon>
        <taxon>Enterobacteriaceae</taxon>
        <taxon>Klebsiella/Raoultella group</taxon>
        <taxon>Klebsiella</taxon>
        <taxon>Klebsiella pneumoniae complex</taxon>
    </lineage>
</organism>
<reference key="1">
    <citation type="journal article" date="2008" name="PLoS Genet.">
        <title>Complete genome sequence of the N2-fixing broad host range endophyte Klebsiella pneumoniae 342 and virulence predictions verified in mice.</title>
        <authorList>
            <person name="Fouts D.E."/>
            <person name="Tyler H.L."/>
            <person name="DeBoy R.T."/>
            <person name="Daugherty S."/>
            <person name="Ren Q."/>
            <person name="Badger J.H."/>
            <person name="Durkin A.S."/>
            <person name="Huot H."/>
            <person name="Shrivastava S."/>
            <person name="Kothari S."/>
            <person name="Dodson R.J."/>
            <person name="Mohamoud Y."/>
            <person name="Khouri H."/>
            <person name="Roesch L.F.W."/>
            <person name="Krogfelt K.A."/>
            <person name="Struve C."/>
            <person name="Triplett E.W."/>
            <person name="Methe B.A."/>
        </authorList>
    </citation>
    <scope>NUCLEOTIDE SEQUENCE [LARGE SCALE GENOMIC DNA]</scope>
    <source>
        <strain>342</strain>
    </source>
</reference>
<feature type="chain" id="PRO_1000089305" description="Adenylosuccinate synthetase">
    <location>
        <begin position="1"/>
        <end position="432"/>
    </location>
</feature>
<feature type="active site" description="Proton acceptor" evidence="1">
    <location>
        <position position="14"/>
    </location>
</feature>
<feature type="active site" description="Proton donor" evidence="1">
    <location>
        <position position="42"/>
    </location>
</feature>
<feature type="binding site" evidence="1">
    <location>
        <begin position="13"/>
        <end position="19"/>
    </location>
    <ligand>
        <name>GTP</name>
        <dbReference type="ChEBI" id="CHEBI:37565"/>
    </ligand>
</feature>
<feature type="binding site" description="in other chain" evidence="1">
    <location>
        <begin position="14"/>
        <end position="17"/>
    </location>
    <ligand>
        <name>IMP</name>
        <dbReference type="ChEBI" id="CHEBI:58053"/>
        <note>ligand shared between dimeric partners</note>
    </ligand>
</feature>
<feature type="binding site" evidence="1">
    <location>
        <position position="14"/>
    </location>
    <ligand>
        <name>Mg(2+)</name>
        <dbReference type="ChEBI" id="CHEBI:18420"/>
    </ligand>
</feature>
<feature type="binding site" description="in other chain" evidence="1">
    <location>
        <begin position="39"/>
        <end position="42"/>
    </location>
    <ligand>
        <name>IMP</name>
        <dbReference type="ChEBI" id="CHEBI:58053"/>
        <note>ligand shared between dimeric partners</note>
    </ligand>
</feature>
<feature type="binding site" evidence="1">
    <location>
        <begin position="41"/>
        <end position="43"/>
    </location>
    <ligand>
        <name>GTP</name>
        <dbReference type="ChEBI" id="CHEBI:37565"/>
    </ligand>
</feature>
<feature type="binding site" evidence="1">
    <location>
        <position position="41"/>
    </location>
    <ligand>
        <name>Mg(2+)</name>
        <dbReference type="ChEBI" id="CHEBI:18420"/>
    </ligand>
</feature>
<feature type="binding site" description="in other chain" evidence="1">
    <location>
        <position position="130"/>
    </location>
    <ligand>
        <name>IMP</name>
        <dbReference type="ChEBI" id="CHEBI:58053"/>
        <note>ligand shared between dimeric partners</note>
    </ligand>
</feature>
<feature type="binding site" evidence="1">
    <location>
        <position position="144"/>
    </location>
    <ligand>
        <name>IMP</name>
        <dbReference type="ChEBI" id="CHEBI:58053"/>
        <note>ligand shared between dimeric partners</note>
    </ligand>
</feature>
<feature type="binding site" description="in other chain" evidence="1">
    <location>
        <position position="225"/>
    </location>
    <ligand>
        <name>IMP</name>
        <dbReference type="ChEBI" id="CHEBI:58053"/>
        <note>ligand shared between dimeric partners</note>
    </ligand>
</feature>
<feature type="binding site" description="in other chain" evidence="1">
    <location>
        <position position="240"/>
    </location>
    <ligand>
        <name>IMP</name>
        <dbReference type="ChEBI" id="CHEBI:58053"/>
        <note>ligand shared between dimeric partners</note>
    </ligand>
</feature>
<feature type="binding site" evidence="1">
    <location>
        <begin position="300"/>
        <end position="306"/>
    </location>
    <ligand>
        <name>substrate</name>
    </ligand>
</feature>
<feature type="binding site" description="in other chain" evidence="1">
    <location>
        <position position="304"/>
    </location>
    <ligand>
        <name>IMP</name>
        <dbReference type="ChEBI" id="CHEBI:58053"/>
        <note>ligand shared between dimeric partners</note>
    </ligand>
</feature>
<feature type="binding site" evidence="1">
    <location>
        <position position="306"/>
    </location>
    <ligand>
        <name>GTP</name>
        <dbReference type="ChEBI" id="CHEBI:37565"/>
    </ligand>
</feature>
<feature type="binding site" evidence="1">
    <location>
        <begin position="332"/>
        <end position="334"/>
    </location>
    <ligand>
        <name>GTP</name>
        <dbReference type="ChEBI" id="CHEBI:37565"/>
    </ligand>
</feature>
<feature type="binding site" evidence="1">
    <location>
        <begin position="415"/>
        <end position="417"/>
    </location>
    <ligand>
        <name>GTP</name>
        <dbReference type="ChEBI" id="CHEBI:37565"/>
    </ligand>
</feature>